<feature type="chain" id="PRO_0000395825" description="Ubiquitin carboxyl-terminal hydrolase calypso">
    <location>
        <begin position="1"/>
        <end position="470"/>
    </location>
</feature>
<feature type="domain" description="UCH catalytic" evidence="3">
    <location>
        <begin position="11"/>
        <end position="241"/>
    </location>
</feature>
<feature type="domain" description="ULD" evidence="4">
    <location>
        <begin position="392"/>
        <end position="420"/>
    </location>
</feature>
<feature type="region of interest" description="Positively charged C-terminal tail required for binding nucleosomes" evidence="1">
    <location>
        <begin position="422"/>
        <end position="470"/>
    </location>
</feature>
<feature type="region of interest" description="Disordered" evidence="5">
    <location>
        <begin position="423"/>
        <end position="470"/>
    </location>
</feature>
<feature type="coiled-coil region" evidence="2">
    <location>
        <begin position="260"/>
        <end position="280"/>
    </location>
</feature>
<feature type="compositionally biased region" description="Polar residues" evidence="5">
    <location>
        <begin position="423"/>
        <end position="434"/>
    </location>
</feature>
<feature type="compositionally biased region" description="Basic residues" evidence="5">
    <location>
        <begin position="456"/>
        <end position="470"/>
    </location>
</feature>
<feature type="active site" description="Nucleophile" evidence="3">
    <location>
        <position position="98"/>
    </location>
</feature>
<feature type="active site" description="Proton donor" evidence="3">
    <location>
        <position position="177"/>
    </location>
</feature>
<feature type="site" description="Transition state stabilizer" evidence="3">
    <location>
        <position position="92"/>
    </location>
</feature>
<feature type="site" description="Important for enzyme activity" evidence="3">
    <location>
        <position position="192"/>
    </location>
</feature>
<protein>
    <recommendedName>
        <fullName evidence="1">Ubiquitin carboxyl-terminal hydrolase calypso</fullName>
        <ecNumber evidence="1">3.4.19.12</ecNumber>
    </recommendedName>
    <alternativeName>
        <fullName evidence="1">BRCA1-associated protein 1 homolog</fullName>
        <shortName evidence="1">BAP1 homolog</shortName>
    </alternativeName>
    <alternativeName>
        <fullName evidence="1">Polycomb group protein calypso</fullName>
    </alternativeName>
</protein>
<keyword id="KW-0156">Chromatin regulator</keyword>
<keyword id="KW-0175">Coiled coil</keyword>
<keyword id="KW-0378">Hydrolase</keyword>
<keyword id="KW-0539">Nucleus</keyword>
<keyword id="KW-0645">Protease</keyword>
<keyword id="KW-1185">Reference proteome</keyword>
<keyword id="KW-0788">Thiol protease</keyword>
<keyword id="KW-0833">Ubl conjugation pathway</keyword>
<sequence length="470" mass="53180">MPVDINRLTDGWLELESDPGLFTLLLEDFGVKGVQVEEIYDLQKTIEGPVFGFIFLFRWIEERRARRKIVETTTEMYVKDEEAVNSIFFAHQVVPNSCATHALLSVLLNCSDIDLGTTLSRLKVHTKGMCPDNKGWAIGNTPELACAHNSHAMPQARRRMDRNSGVSTGRFTGEAFHFVSFCPINGHLFELDGLKPFPMDHGPWGEKEDWTDKFRRVMSDRLGISTDRRIAITHKLKMLRTNQTIVSAALEKLLKSKQLESRSQAEIRETVDKIKKEEQESTVKLSSEYSQLLEMHEKDEPAVAMSKELESLVSLNSSSDSVEIIGETEIKKENPPPSPPPAFIGAGTFSPKDLLSLLKNLESEINITEQHLCDENEKRAMFKVDDCRRTHNYDEFICTFLSMLAYQGELGDLVTQHLVTSRKPSLGGVQNSGSRGVVRNYNKKSTTNGSSPKTPSSKRRRGRTKYRKRK</sequence>
<comment type="function">
    <text evidence="1">Catalytic component of the polycomb repressive deubiquitinase (PR-DUB) complex, a complex that specifically mediates deubiquitination of histone H2A monoubiquitinated at 'Lys-119' (H2AK118ub1). Mediates bisymmetric organization of the PR-DUB complex and is involved in association with nucleosomes to mediate deubiquitination. Does not deubiquitinate monoubiquitinated histone H2B. Required to maintain the transcriptionally repressive state of homeotic genes throughout development. The PR-DUB complex has weak or no activity toward 'Lys-48'- and 'Lys-63'-linked polyubiquitin chains. Polycomb group (PcG) protein.</text>
</comment>
<comment type="catalytic activity">
    <reaction evidence="1">
        <text>Thiol-dependent hydrolysis of ester, thioester, amide, peptide and isopeptide bonds formed by the C-terminal Gly of ubiquitin (a 76-residue protein attached to proteins as an intracellular targeting signal).</text>
        <dbReference type="EC" id="3.4.19.12"/>
    </reaction>
</comment>
<comment type="subunit">
    <text evidence="1">Catalytic component of the polycomb repressive deubiquitinase (PR-DUB) complex, at least composed of caly/calypso, Asx and sba (MBD5/6 homolog). The PR-DUB complex associates with nucleosomes to mediate deubiquitination of histone H2AK118ub1 substrates; the association requires the positively charged C-terminal tail of caly, probably due to direct binding of DNA. Interacts (via ULD domain) with Asx (via DEUBAD domain); the interaction produces a stable heterodimer with a composite binding site for ubiquitin. Homodimerizes (via coiled-coil hinge-region between the UCH and ULD domains) to mediate assembly of 2 copies of the caly-Asx heterodimer into a bisymmetric tetramer; dimerization enhances PR-DUB association with nucleosomes.</text>
</comment>
<comment type="subcellular location">
    <subcellularLocation>
        <location evidence="1">Nucleus</location>
    </subcellularLocation>
    <text evidence="1">Localizes to PcG response elements (PREs).</text>
</comment>
<comment type="similarity">
    <text evidence="6">Belongs to the peptidase C12 family. BAP1 subfamily.</text>
</comment>
<reference key="1">
    <citation type="submission" date="2007-03" db="EMBL/GenBank/DDBJ databases">
        <title>Annotation of Culex pipiens quinquefasciatus.</title>
        <authorList>
            <consortium name="The Broad Institute Genome Sequencing Platform"/>
            <person name="Atkinson P.W."/>
            <person name="Hemingway J."/>
            <person name="Christensen B.M."/>
            <person name="Higgs S."/>
            <person name="Kodira C.D."/>
            <person name="Hannick L.I."/>
            <person name="Megy K."/>
            <person name="O'Leary S.B."/>
            <person name="Pearson M."/>
            <person name="Haas B.J."/>
            <person name="Mauceli E."/>
            <person name="Wortman J.R."/>
            <person name="Lee N.H."/>
            <person name="Guigo R."/>
            <person name="Stanke M."/>
            <person name="Alvarado L."/>
            <person name="Amedeo P."/>
            <person name="Antoine C.H."/>
            <person name="Arensburger P."/>
            <person name="Bidwell S.L."/>
            <person name="Crawford M."/>
            <person name="Camaro F."/>
            <person name="Devon K."/>
            <person name="Engels R."/>
            <person name="Hammond M."/>
            <person name="Howarth C."/>
            <person name="Koehrsen M."/>
            <person name="Lawson D."/>
            <person name="Montgomery P."/>
            <person name="Nene V."/>
            <person name="Nusbaum C."/>
            <person name="Puiu D."/>
            <person name="Romero-Severson J."/>
            <person name="Severson D.W."/>
            <person name="Shumway M."/>
            <person name="Sisk P."/>
            <person name="Stolte C."/>
            <person name="Zeng Q."/>
            <person name="Eisenstadt E."/>
            <person name="Fraser-Liggett C.M."/>
            <person name="Strausberg R."/>
            <person name="Galagan J."/>
            <person name="Birren B."/>
            <person name="Collins F.H."/>
        </authorList>
    </citation>
    <scope>NUCLEOTIDE SEQUENCE [LARGE SCALE GENOMIC DNA]</scope>
    <source>
        <strain>JHB</strain>
    </source>
</reference>
<organism>
    <name type="scientific">Culex quinquefasciatus</name>
    <name type="common">Southern house mosquito</name>
    <name type="synonym">Culex pungens</name>
    <dbReference type="NCBI Taxonomy" id="7176"/>
    <lineage>
        <taxon>Eukaryota</taxon>
        <taxon>Metazoa</taxon>
        <taxon>Ecdysozoa</taxon>
        <taxon>Arthropoda</taxon>
        <taxon>Hexapoda</taxon>
        <taxon>Insecta</taxon>
        <taxon>Pterygota</taxon>
        <taxon>Neoptera</taxon>
        <taxon>Endopterygota</taxon>
        <taxon>Diptera</taxon>
        <taxon>Nematocera</taxon>
        <taxon>Culicoidea</taxon>
        <taxon>Culicidae</taxon>
        <taxon>Culicinae</taxon>
        <taxon>Culicini</taxon>
        <taxon>Culex</taxon>
        <taxon>Culex</taxon>
    </lineage>
</organism>
<proteinExistence type="inferred from homology"/>
<accession>B0W2R4</accession>
<gene>
    <name evidence="1" type="primary">caly</name>
    <name evidence="1" type="synonym">BAP1</name>
    <name type="ORF">CPIJ001439</name>
</gene>
<name>CALYP_CULQU</name>
<evidence type="ECO:0000250" key="1">
    <source>
        <dbReference type="UniProtKB" id="Q7K5N4"/>
    </source>
</evidence>
<evidence type="ECO:0000255" key="2"/>
<evidence type="ECO:0000255" key="3">
    <source>
        <dbReference type="PROSITE-ProRule" id="PRU01393"/>
    </source>
</evidence>
<evidence type="ECO:0000255" key="4">
    <source>
        <dbReference type="PROSITE-ProRule" id="PRU01394"/>
    </source>
</evidence>
<evidence type="ECO:0000256" key="5">
    <source>
        <dbReference type="SAM" id="MobiDB-lite"/>
    </source>
</evidence>
<evidence type="ECO:0000305" key="6"/>
<dbReference type="EC" id="3.4.19.12" evidence="1"/>
<dbReference type="EMBL" id="DS231828">
    <property type="protein sequence ID" value="EDS29817.1"/>
    <property type="molecule type" value="Genomic_DNA"/>
</dbReference>
<dbReference type="RefSeq" id="XP_001842998.1">
    <property type="nucleotide sequence ID" value="XM_001842946.1"/>
</dbReference>
<dbReference type="SMR" id="B0W2R4"/>
<dbReference type="FunCoup" id="B0W2R4">
    <property type="interactions" value="1216"/>
</dbReference>
<dbReference type="STRING" id="7176.B0W2R4"/>
<dbReference type="MEROPS" id="C12.A09"/>
<dbReference type="EnsemblMetazoa" id="CPIJ001439-RA">
    <property type="protein sequence ID" value="CPIJ001439-PA"/>
    <property type="gene ID" value="CPIJ001439"/>
</dbReference>
<dbReference type="KEGG" id="cqu:CpipJ_CPIJ001439"/>
<dbReference type="VEuPathDB" id="VectorBase:CPIJ001439"/>
<dbReference type="VEuPathDB" id="VectorBase:CQUJHB016383"/>
<dbReference type="eggNOG" id="KOG2778">
    <property type="taxonomic scope" value="Eukaryota"/>
</dbReference>
<dbReference type="HOGENOM" id="CLU_018316_2_1_1"/>
<dbReference type="InParanoid" id="B0W2R4"/>
<dbReference type="OMA" id="MNHGCWE"/>
<dbReference type="OrthoDB" id="1924260at2759"/>
<dbReference type="PhylomeDB" id="B0W2R4"/>
<dbReference type="Proteomes" id="UP000002320">
    <property type="component" value="Unassembled WGS sequence"/>
</dbReference>
<dbReference type="GO" id="GO:0000785">
    <property type="term" value="C:chromatin"/>
    <property type="evidence" value="ECO:0000250"/>
    <property type="project" value="UniProtKB"/>
</dbReference>
<dbReference type="GO" id="GO:0005737">
    <property type="term" value="C:cytoplasm"/>
    <property type="evidence" value="ECO:0007669"/>
    <property type="project" value="TreeGrafter"/>
</dbReference>
<dbReference type="GO" id="GO:0035517">
    <property type="term" value="C:PR-DUB complex"/>
    <property type="evidence" value="ECO:0000250"/>
    <property type="project" value="UniProtKB"/>
</dbReference>
<dbReference type="GO" id="GO:0003682">
    <property type="term" value="F:chromatin binding"/>
    <property type="evidence" value="ECO:0000250"/>
    <property type="project" value="UniProtKB"/>
</dbReference>
<dbReference type="GO" id="GO:0004843">
    <property type="term" value="F:cysteine-type deubiquitinase activity"/>
    <property type="evidence" value="ECO:0000250"/>
    <property type="project" value="UniProtKB"/>
</dbReference>
<dbReference type="GO" id="GO:0040029">
    <property type="term" value="P:epigenetic regulation of gene expression"/>
    <property type="evidence" value="ECO:0000250"/>
    <property type="project" value="UniProtKB"/>
</dbReference>
<dbReference type="GO" id="GO:0031507">
    <property type="term" value="P:heterochromatin formation"/>
    <property type="evidence" value="ECO:0000250"/>
    <property type="project" value="UniProtKB"/>
</dbReference>
<dbReference type="GO" id="GO:0016579">
    <property type="term" value="P:protein deubiquitination"/>
    <property type="evidence" value="ECO:0007669"/>
    <property type="project" value="TreeGrafter"/>
</dbReference>
<dbReference type="GO" id="GO:0006511">
    <property type="term" value="P:ubiquitin-dependent protein catabolic process"/>
    <property type="evidence" value="ECO:0007669"/>
    <property type="project" value="InterPro"/>
</dbReference>
<dbReference type="CDD" id="cd09617">
    <property type="entry name" value="Peptidase_C12_UCH37_BAP1"/>
    <property type="match status" value="1"/>
</dbReference>
<dbReference type="FunFam" id="1.20.58.860:FF:000006">
    <property type="entry name" value="Ubiquitin carboxyl-terminal hydrolase"/>
    <property type="match status" value="1"/>
</dbReference>
<dbReference type="FunFam" id="3.40.532.10:FF:000002">
    <property type="entry name" value="Ubiquitin carboxyl-terminal hydrolase"/>
    <property type="match status" value="1"/>
</dbReference>
<dbReference type="Gene3D" id="1.20.58.860">
    <property type="match status" value="1"/>
</dbReference>
<dbReference type="Gene3D" id="3.40.532.10">
    <property type="entry name" value="Peptidase C12, ubiquitin carboxyl-terminal hydrolase"/>
    <property type="match status" value="1"/>
</dbReference>
<dbReference type="InterPro" id="IPR038765">
    <property type="entry name" value="Papain-like_cys_pep_sf"/>
</dbReference>
<dbReference type="InterPro" id="IPR001578">
    <property type="entry name" value="Peptidase_C12_UCH"/>
</dbReference>
<dbReference type="InterPro" id="IPR036959">
    <property type="entry name" value="Peptidase_C12_UCH_sf"/>
</dbReference>
<dbReference type="InterPro" id="IPR041507">
    <property type="entry name" value="UCH_C"/>
</dbReference>
<dbReference type="PANTHER" id="PTHR10589">
    <property type="entry name" value="UBIQUITIN CARBOXYL-TERMINAL HYDROLASE"/>
    <property type="match status" value="1"/>
</dbReference>
<dbReference type="PANTHER" id="PTHR10589:SF28">
    <property type="entry name" value="UBIQUITIN CARBOXYL-TERMINAL HYDROLASE BAP1"/>
    <property type="match status" value="1"/>
</dbReference>
<dbReference type="Pfam" id="PF01088">
    <property type="entry name" value="Peptidase_C12"/>
    <property type="match status" value="1"/>
</dbReference>
<dbReference type="Pfam" id="PF18031">
    <property type="entry name" value="UCH_C"/>
    <property type="match status" value="1"/>
</dbReference>
<dbReference type="PRINTS" id="PR00707">
    <property type="entry name" value="UBCTHYDRLASE"/>
</dbReference>
<dbReference type="SUPFAM" id="SSF54001">
    <property type="entry name" value="Cysteine proteinases"/>
    <property type="match status" value="1"/>
</dbReference>
<dbReference type="PROSITE" id="PS52048">
    <property type="entry name" value="UCH_DOMAIN"/>
    <property type="match status" value="1"/>
</dbReference>
<dbReference type="PROSITE" id="PS52049">
    <property type="entry name" value="ULD"/>
    <property type="match status" value="1"/>
</dbReference>